<reference key="1">
    <citation type="journal article" date="2011" name="MBio">
        <title>Novel metabolic attributes of the genus Cyanothece, comprising a group of unicellular nitrogen-fixing Cyanobacteria.</title>
        <authorList>
            <person name="Bandyopadhyay A."/>
            <person name="Elvitigala T."/>
            <person name="Welsh E."/>
            <person name="Stockel J."/>
            <person name="Liberton M."/>
            <person name="Min H."/>
            <person name="Sherman L.A."/>
            <person name="Pakrasi H.B."/>
        </authorList>
    </citation>
    <scope>NUCLEOTIDE SEQUENCE [LARGE SCALE GENOMIC DNA]</scope>
    <source>
        <strain>PCC 7424</strain>
    </source>
</reference>
<organism>
    <name type="scientific">Gloeothece citriformis (strain PCC 7424)</name>
    <name type="common">Cyanothece sp. (strain PCC 7424)</name>
    <dbReference type="NCBI Taxonomy" id="65393"/>
    <lineage>
        <taxon>Bacteria</taxon>
        <taxon>Bacillati</taxon>
        <taxon>Cyanobacteriota</taxon>
        <taxon>Cyanophyceae</taxon>
        <taxon>Oscillatoriophycideae</taxon>
        <taxon>Chroococcales</taxon>
        <taxon>Aphanothecaceae</taxon>
        <taxon>Gloeothece</taxon>
        <taxon>Gloeothece citriformis</taxon>
    </lineage>
</organism>
<name>EFTS_GLOC7</name>
<gene>
    <name evidence="1" type="primary">tsf</name>
    <name type="ordered locus">PCC7424_1152</name>
</gene>
<keyword id="KW-0963">Cytoplasm</keyword>
<keyword id="KW-0251">Elongation factor</keyword>
<keyword id="KW-0648">Protein biosynthesis</keyword>
<keyword id="KW-1185">Reference proteome</keyword>
<comment type="function">
    <text evidence="1">Associates with the EF-Tu.GDP complex and induces the exchange of GDP to GTP. It remains bound to the aminoacyl-tRNA.EF-Tu.GTP complex up to the GTP hydrolysis stage on the ribosome.</text>
</comment>
<comment type="subcellular location">
    <subcellularLocation>
        <location evidence="1">Cytoplasm</location>
    </subcellularLocation>
</comment>
<comment type="similarity">
    <text evidence="1">Belongs to the EF-Ts family.</text>
</comment>
<evidence type="ECO:0000255" key="1">
    <source>
        <dbReference type="HAMAP-Rule" id="MF_00050"/>
    </source>
</evidence>
<evidence type="ECO:0000256" key="2">
    <source>
        <dbReference type="SAM" id="MobiDB-lite"/>
    </source>
</evidence>
<feature type="chain" id="PRO_1000116722" description="Elongation factor Ts">
    <location>
        <begin position="1"/>
        <end position="286"/>
    </location>
</feature>
<feature type="region of interest" description="Involved in Mg(2+) ion dislocation from EF-Tu" evidence="1">
    <location>
        <begin position="82"/>
        <end position="85"/>
    </location>
</feature>
<feature type="region of interest" description="Disordered" evidence="2">
    <location>
        <begin position="212"/>
        <end position="286"/>
    </location>
</feature>
<feature type="compositionally biased region" description="Polar residues" evidence="2">
    <location>
        <begin position="215"/>
        <end position="227"/>
    </location>
</feature>
<feature type="compositionally biased region" description="Low complexity" evidence="2">
    <location>
        <begin position="253"/>
        <end position="269"/>
    </location>
</feature>
<sequence>MAEITAKLVKELREKTGAGMMDCKKALGESGGDMEKATEWLRQKGITSAEKKSGRITAEGLIHSYIHTGGRIGVLVELNCETDFVARGDTFKDLVNNIAMQIAACPNVEYVRVEDIPEAVAQKEKEIEKGRDDLAGKPENIKDKIVEGRIGKRLKELSLMDQPYIKDQSITVAELIKQTIAQIGENIQVRRFVRFVLGEGIEKEEKNFAEEVAAQTGQKVEQPQAAQETAKVEPPTPETVEEVEPPVTPPAQETDSPAAETTTEPPKTTPVDKPKGSPSKKGKKKK</sequence>
<accession>B7K735</accession>
<dbReference type="EMBL" id="CP001291">
    <property type="protein sequence ID" value="ACK69603.1"/>
    <property type="molecule type" value="Genomic_DNA"/>
</dbReference>
<dbReference type="RefSeq" id="WP_012598549.1">
    <property type="nucleotide sequence ID" value="NC_011729.1"/>
</dbReference>
<dbReference type="SMR" id="B7K735"/>
<dbReference type="STRING" id="65393.PCC7424_1152"/>
<dbReference type="KEGG" id="cyc:PCC7424_1152"/>
<dbReference type="eggNOG" id="COG0264">
    <property type="taxonomic scope" value="Bacteria"/>
</dbReference>
<dbReference type="HOGENOM" id="CLU_047155_1_0_3"/>
<dbReference type="OrthoDB" id="9808348at2"/>
<dbReference type="Proteomes" id="UP000002384">
    <property type="component" value="Chromosome"/>
</dbReference>
<dbReference type="GO" id="GO:0005737">
    <property type="term" value="C:cytoplasm"/>
    <property type="evidence" value="ECO:0007669"/>
    <property type="project" value="UniProtKB-SubCell"/>
</dbReference>
<dbReference type="GO" id="GO:0003746">
    <property type="term" value="F:translation elongation factor activity"/>
    <property type="evidence" value="ECO:0007669"/>
    <property type="project" value="UniProtKB-UniRule"/>
</dbReference>
<dbReference type="CDD" id="cd14275">
    <property type="entry name" value="UBA_EF-Ts"/>
    <property type="match status" value="1"/>
</dbReference>
<dbReference type="FunFam" id="1.10.286.20:FF:000001">
    <property type="entry name" value="Elongation factor Ts"/>
    <property type="match status" value="1"/>
</dbReference>
<dbReference type="FunFam" id="1.10.8.10:FF:000001">
    <property type="entry name" value="Elongation factor Ts"/>
    <property type="match status" value="1"/>
</dbReference>
<dbReference type="Gene3D" id="1.10.286.20">
    <property type="match status" value="1"/>
</dbReference>
<dbReference type="Gene3D" id="1.10.8.10">
    <property type="entry name" value="DNA helicase RuvA subunit, C-terminal domain"/>
    <property type="match status" value="1"/>
</dbReference>
<dbReference type="Gene3D" id="3.30.479.20">
    <property type="entry name" value="Elongation factor Ts, dimerisation domain"/>
    <property type="match status" value="1"/>
</dbReference>
<dbReference type="HAMAP" id="MF_00050">
    <property type="entry name" value="EF_Ts"/>
    <property type="match status" value="1"/>
</dbReference>
<dbReference type="InterPro" id="IPR036402">
    <property type="entry name" value="EF-Ts_dimer_sf"/>
</dbReference>
<dbReference type="InterPro" id="IPR001816">
    <property type="entry name" value="Transl_elong_EFTs/EF1B"/>
</dbReference>
<dbReference type="InterPro" id="IPR014039">
    <property type="entry name" value="Transl_elong_EFTs/EF1B_dimer"/>
</dbReference>
<dbReference type="InterPro" id="IPR018101">
    <property type="entry name" value="Transl_elong_Ts_CS"/>
</dbReference>
<dbReference type="InterPro" id="IPR009060">
    <property type="entry name" value="UBA-like_sf"/>
</dbReference>
<dbReference type="NCBIfam" id="TIGR00116">
    <property type="entry name" value="tsf"/>
    <property type="match status" value="2"/>
</dbReference>
<dbReference type="PANTHER" id="PTHR11741">
    <property type="entry name" value="ELONGATION FACTOR TS"/>
    <property type="match status" value="1"/>
</dbReference>
<dbReference type="PANTHER" id="PTHR11741:SF10">
    <property type="entry name" value="POLYPROTEIN OF EF-TS, CHLOROPLASTIC"/>
    <property type="match status" value="1"/>
</dbReference>
<dbReference type="Pfam" id="PF00889">
    <property type="entry name" value="EF_TS"/>
    <property type="match status" value="1"/>
</dbReference>
<dbReference type="SUPFAM" id="SSF54713">
    <property type="entry name" value="Elongation factor Ts (EF-Ts), dimerisation domain"/>
    <property type="match status" value="1"/>
</dbReference>
<dbReference type="SUPFAM" id="SSF46934">
    <property type="entry name" value="UBA-like"/>
    <property type="match status" value="1"/>
</dbReference>
<dbReference type="PROSITE" id="PS01126">
    <property type="entry name" value="EF_TS_1"/>
    <property type="match status" value="1"/>
</dbReference>
<dbReference type="PROSITE" id="PS01127">
    <property type="entry name" value="EF_TS_2"/>
    <property type="match status" value="1"/>
</dbReference>
<proteinExistence type="inferred from homology"/>
<protein>
    <recommendedName>
        <fullName evidence="1">Elongation factor Ts</fullName>
        <shortName evidence="1">EF-Ts</shortName>
    </recommendedName>
</protein>